<protein>
    <recommendedName>
        <fullName evidence="1">Non-structural glycoprotein 4</fullName>
        <shortName evidence="1">NSP4</shortName>
    </recommendedName>
    <alternativeName>
        <fullName evidence="1">NCVP5</fullName>
    </alternativeName>
    <alternativeName>
        <fullName evidence="1">NS28</fullName>
    </alternativeName>
</protein>
<evidence type="ECO:0000255" key="1">
    <source>
        <dbReference type="HAMAP-Rule" id="MF_04091"/>
    </source>
</evidence>
<accession>Q82055</accession>
<proteinExistence type="inferred from homology"/>
<dbReference type="EMBL" id="X83967">
    <property type="protein sequence ID" value="CAA58801.1"/>
    <property type="molecule type" value="Genomic_RNA"/>
</dbReference>
<dbReference type="RefSeq" id="YP_392515.1">
    <property type="nucleotide sequence ID" value="NC_007573.1"/>
</dbReference>
<dbReference type="SMR" id="Q82055"/>
<dbReference type="GeneID" id="3844400"/>
<dbReference type="KEGG" id="vg:3844400"/>
<dbReference type="Proteomes" id="UP000007664">
    <property type="component" value="Genome"/>
</dbReference>
<dbReference type="GO" id="GO:0005576">
    <property type="term" value="C:extracellular region"/>
    <property type="evidence" value="ECO:0007669"/>
    <property type="project" value="UniProtKB-SubCell"/>
</dbReference>
<dbReference type="GO" id="GO:0044155">
    <property type="term" value="C:host caveola"/>
    <property type="evidence" value="ECO:0007669"/>
    <property type="project" value="UniProtKB-SubCell"/>
</dbReference>
<dbReference type="GO" id="GO:0044169">
    <property type="term" value="C:host cell rough endoplasmic reticulum membrane"/>
    <property type="evidence" value="ECO:0007669"/>
    <property type="project" value="UniProtKB-SubCell"/>
</dbReference>
<dbReference type="GO" id="GO:0016020">
    <property type="term" value="C:membrane"/>
    <property type="evidence" value="ECO:0007669"/>
    <property type="project" value="UniProtKB-UniRule"/>
</dbReference>
<dbReference type="GO" id="GO:0015267">
    <property type="term" value="F:channel activity"/>
    <property type="evidence" value="ECO:0007669"/>
    <property type="project" value="UniProtKB-KW"/>
</dbReference>
<dbReference type="GO" id="GO:0090729">
    <property type="term" value="F:toxin activity"/>
    <property type="evidence" value="ECO:0007669"/>
    <property type="project" value="UniProtKB-UniRule"/>
</dbReference>
<dbReference type="GO" id="GO:0034220">
    <property type="term" value="P:monoatomic ion transmembrane transport"/>
    <property type="evidence" value="ECO:0007669"/>
    <property type="project" value="UniProtKB-KW"/>
</dbReference>
<dbReference type="GO" id="GO:0039520">
    <property type="term" value="P:symbiont-mediated activation of host autophagy"/>
    <property type="evidence" value="ECO:0007669"/>
    <property type="project" value="UniProtKB-KW"/>
</dbReference>
<dbReference type="GO" id="GO:0016032">
    <property type="term" value="P:viral process"/>
    <property type="evidence" value="ECO:0007669"/>
    <property type="project" value="UniProtKB-UniRule"/>
</dbReference>
<dbReference type="HAMAP" id="MF_04091">
    <property type="entry name" value="ROTA_NSP4"/>
    <property type="match status" value="1"/>
</dbReference>
<dbReference type="InterPro" id="IPR002107">
    <property type="entry name" value="Rotavirus_NSP4"/>
</dbReference>
<sequence length="150" mass="17705">MDFINQTLFSKYTESNVDTIPYLLGLILALTNGSRILRFINSFIIICKHIVTTSKSAIDKMRKINNSEHNTKNAHEEYEEVMKQIREMRIHMTALFNSLHDDNVKWRMSESIRREKKHEMKMSDNRNEFKHSHNDTNICEKSGLETEVCL</sequence>
<comment type="function">
    <text evidence="1">Plays an essential role in the virus replication cycle by acting as a viroporin. Creates a pore in the host endoplasmic reticulum and as a consequence releases Ca(2+) in the cytoplasm of infected cell. In turn, high levels of cytoplasmic calcium trigger membrane trafficking and transport of viral ER-associated proteins to viroplasms, sites of viral genome replication and immature particle assembly.</text>
</comment>
<comment type="function">
    <text evidence="1">The secreted form acts as an enterotoxin that causes phospholipase C-dependent elevation of the intracellular calcium concentration in host intestinal mucosa cells. Increased concentration of intracellular calcium disrupts the cytoskeleton and the tight junctions, raising the paracellular permeability. Potentiates chloride ion secretion through a calcium ion-dependent signaling pathway, inducing age-dependent diarrhea. To perform this enterotoxigenic role in vivo, NSP4 is released from infected enterocytes in a soluble form capable of diffusing within the intestinal lumen and interacting with host plasma membrane receptors on neighboring epithelial cells such as integrins ITGA1/ITGB1 and ITGA2/ITGB1.</text>
</comment>
<comment type="subunit">
    <text evidence="1">Homotetramer. Interacts with the immature particle in the viroplasm. Interacts with host CAV1, early and late in infection. Interacts with host integrin ITGA1/ITGB1 heterodimer. Interacts with host integrin ITGA2/ITGB1 heterodimer. Interaction with microtubules blocks trafficking to the Golgi apparatus.</text>
</comment>
<comment type="subcellular location">
    <subcellularLocation>
        <location evidence="1">Host rough endoplasmic reticulum membrane</location>
        <topology evidence="1">Single-pass type III membrane protein</topology>
    </subcellularLocation>
    <subcellularLocation>
        <location evidence="1">Host membrane</location>
        <location evidence="1">Host caveola</location>
        <topology evidence="1">Single-pass type III membrane protein</topology>
    </subcellularLocation>
    <subcellularLocation>
        <location evidence="1">Secreted</location>
    </subcellularLocation>
    <text evidence="1">NSP4 also localizes in vesicular structures which contain autophagosomal markers and associate with viroplasms in virus-infected cells. Additionally, a soluble form of glycosylated NSP4 is secreted despite retention of its transmembrane domain.</text>
</comment>
<comment type="PTM">
    <text evidence="1">The N-glycosyl content is primarily Man(9)GlcNAc, with a small amount of Man(8)GlcNAc.</text>
</comment>
<comment type="similarity">
    <text evidence="1">Belongs to the rotavirus NSP4 family.</text>
</comment>
<reference key="1">
    <citation type="journal article" date="1995" name="Virus Genes">
        <title>Molecular characterization of the 11th RNA segment from human group C rotavirus.</title>
        <authorList>
            <person name="Deng Y."/>
            <person name="Fielding P.A."/>
            <person name="Lambden P.R."/>
            <person name="Caul E.O."/>
            <person name="Clarke I.N."/>
        </authorList>
    </citation>
    <scope>NUCLEOTIDE SEQUENCE [GENOMIC RNA]</scope>
</reference>
<name>NSP4_ROTHC</name>
<feature type="chain" id="PRO_0000369890" description="Non-structural glycoprotein 4">
    <location>
        <begin position="1"/>
        <end position="150"/>
    </location>
</feature>
<feature type="topological domain" description="Lumenal" evidence="1">
    <location>
        <begin position="1"/>
        <end position="15"/>
    </location>
</feature>
<feature type="transmembrane region" description="Helical; Signal-anchor for type III membrane protein" evidence="1">
    <location>
        <begin position="16"/>
        <end position="44"/>
    </location>
</feature>
<feature type="topological domain" description="Cytoplasmic" evidence="1">
    <location>
        <begin position="45"/>
        <end position="150"/>
    </location>
</feature>
<feature type="glycosylation site" description="N-linked (GlcNAc...) asparagine; by host" evidence="1">
    <location>
        <position position="5"/>
    </location>
</feature>
<organismHost>
    <name type="scientific">Homo sapiens</name>
    <name type="common">Human</name>
    <dbReference type="NCBI Taxonomy" id="9606"/>
</organismHost>
<organism>
    <name type="scientific">Rotavirus C (isolate RVC/Human/United Kingdom/Bristol/1989)</name>
    <name type="common">RV-C</name>
    <dbReference type="NCBI Taxonomy" id="31567"/>
    <lineage>
        <taxon>Viruses</taxon>
        <taxon>Riboviria</taxon>
        <taxon>Orthornavirae</taxon>
        <taxon>Duplornaviricota</taxon>
        <taxon>Resentoviricetes</taxon>
        <taxon>Reovirales</taxon>
        <taxon>Sedoreoviridae</taxon>
        <taxon>Rotavirus</taxon>
        <taxon>Rotavirus C</taxon>
    </lineage>
</organism>
<keyword id="KW-1072">Activation of host autophagy by virus</keyword>
<keyword id="KW-0260">Enterotoxin</keyword>
<keyword id="KW-0325">Glycoprotein</keyword>
<keyword id="KW-1038">Host endoplasmic reticulum</keyword>
<keyword id="KW-1043">Host membrane</keyword>
<keyword id="KW-0945">Host-virus interaction</keyword>
<keyword id="KW-0407">Ion channel</keyword>
<keyword id="KW-0406">Ion transport</keyword>
<keyword id="KW-0472">Membrane</keyword>
<keyword id="KW-1185">Reference proteome</keyword>
<keyword id="KW-0964">Secreted</keyword>
<keyword id="KW-0735">Signal-anchor</keyword>
<keyword id="KW-0800">Toxin</keyword>
<keyword id="KW-0812">Transmembrane</keyword>
<keyword id="KW-1133">Transmembrane helix</keyword>
<keyword id="KW-0813">Transport</keyword>
<keyword id="KW-1182">Viral ion channel</keyword>
<keyword id="KW-0843">Virulence</keyword>